<evidence type="ECO:0000255" key="1">
    <source>
        <dbReference type="HAMAP-Rule" id="MF_00219"/>
    </source>
</evidence>
<dbReference type="EC" id="3.5.2.3" evidence="1"/>
<dbReference type="EMBL" id="CP000880">
    <property type="protein sequence ID" value="ABX21719.1"/>
    <property type="molecule type" value="Genomic_DNA"/>
</dbReference>
<dbReference type="SMR" id="A9MH00"/>
<dbReference type="STRING" id="41514.SARI_01834"/>
<dbReference type="MEROPS" id="M38.A02"/>
<dbReference type="KEGG" id="ses:SARI_01834"/>
<dbReference type="HOGENOM" id="CLU_041558_1_0_6"/>
<dbReference type="UniPathway" id="UPA00070">
    <property type="reaction ID" value="UER00117"/>
</dbReference>
<dbReference type="Proteomes" id="UP000002084">
    <property type="component" value="Chromosome"/>
</dbReference>
<dbReference type="GO" id="GO:0005829">
    <property type="term" value="C:cytosol"/>
    <property type="evidence" value="ECO:0007669"/>
    <property type="project" value="TreeGrafter"/>
</dbReference>
<dbReference type="GO" id="GO:0004151">
    <property type="term" value="F:dihydroorotase activity"/>
    <property type="evidence" value="ECO:0007669"/>
    <property type="project" value="UniProtKB-UniRule"/>
</dbReference>
<dbReference type="GO" id="GO:0008270">
    <property type="term" value="F:zinc ion binding"/>
    <property type="evidence" value="ECO:0007669"/>
    <property type="project" value="UniProtKB-UniRule"/>
</dbReference>
<dbReference type="GO" id="GO:0006207">
    <property type="term" value="P:'de novo' pyrimidine nucleobase biosynthetic process"/>
    <property type="evidence" value="ECO:0007669"/>
    <property type="project" value="TreeGrafter"/>
</dbReference>
<dbReference type="GO" id="GO:0044205">
    <property type="term" value="P:'de novo' UMP biosynthetic process"/>
    <property type="evidence" value="ECO:0007669"/>
    <property type="project" value="UniProtKB-UniRule"/>
</dbReference>
<dbReference type="CDD" id="cd01294">
    <property type="entry name" value="DHOase"/>
    <property type="match status" value="1"/>
</dbReference>
<dbReference type="FunFam" id="3.20.20.140:FF:000006">
    <property type="entry name" value="Dihydroorotase"/>
    <property type="match status" value="1"/>
</dbReference>
<dbReference type="Gene3D" id="3.20.20.140">
    <property type="entry name" value="Metal-dependent hydrolases"/>
    <property type="match status" value="1"/>
</dbReference>
<dbReference type="HAMAP" id="MF_00219">
    <property type="entry name" value="PyrC_classII"/>
    <property type="match status" value="1"/>
</dbReference>
<dbReference type="InterPro" id="IPR006680">
    <property type="entry name" value="Amidohydro-rel"/>
</dbReference>
<dbReference type="InterPro" id="IPR004721">
    <property type="entry name" value="DHOdimr"/>
</dbReference>
<dbReference type="InterPro" id="IPR002195">
    <property type="entry name" value="Dihydroorotase_CS"/>
</dbReference>
<dbReference type="InterPro" id="IPR032466">
    <property type="entry name" value="Metal_Hydrolase"/>
</dbReference>
<dbReference type="NCBIfam" id="TIGR00856">
    <property type="entry name" value="pyrC_dimer"/>
    <property type="match status" value="1"/>
</dbReference>
<dbReference type="PANTHER" id="PTHR43137">
    <property type="entry name" value="DIHYDROOROTASE"/>
    <property type="match status" value="1"/>
</dbReference>
<dbReference type="PANTHER" id="PTHR43137:SF1">
    <property type="entry name" value="DIHYDROOROTASE"/>
    <property type="match status" value="1"/>
</dbReference>
<dbReference type="Pfam" id="PF01979">
    <property type="entry name" value="Amidohydro_1"/>
    <property type="match status" value="1"/>
</dbReference>
<dbReference type="PIRSF" id="PIRSF001237">
    <property type="entry name" value="DHOdimr"/>
    <property type="match status" value="1"/>
</dbReference>
<dbReference type="SUPFAM" id="SSF51556">
    <property type="entry name" value="Metallo-dependent hydrolases"/>
    <property type="match status" value="1"/>
</dbReference>
<dbReference type="PROSITE" id="PS00482">
    <property type="entry name" value="DIHYDROOROTASE_1"/>
    <property type="match status" value="1"/>
</dbReference>
<dbReference type="PROSITE" id="PS00483">
    <property type="entry name" value="DIHYDROOROTASE_2"/>
    <property type="match status" value="1"/>
</dbReference>
<feature type="chain" id="PRO_1000078101" description="Dihydroorotase">
    <location>
        <begin position="1"/>
        <end position="348"/>
    </location>
</feature>
<feature type="active site" evidence="1">
    <location>
        <position position="251"/>
    </location>
</feature>
<feature type="binding site" evidence="1">
    <location>
        <position position="17"/>
    </location>
    <ligand>
        <name>Zn(2+)</name>
        <dbReference type="ChEBI" id="CHEBI:29105"/>
        <label>1</label>
    </ligand>
</feature>
<feature type="binding site" evidence="1">
    <location>
        <begin position="19"/>
        <end position="21"/>
    </location>
    <ligand>
        <name>substrate</name>
    </ligand>
</feature>
<feature type="binding site" evidence="1">
    <location>
        <position position="19"/>
    </location>
    <ligand>
        <name>Zn(2+)</name>
        <dbReference type="ChEBI" id="CHEBI:29105"/>
        <label>1</label>
    </ligand>
</feature>
<feature type="binding site" evidence="1">
    <location>
        <position position="45"/>
    </location>
    <ligand>
        <name>substrate</name>
    </ligand>
</feature>
<feature type="binding site" description="via carbamate group" evidence="1">
    <location>
        <position position="103"/>
    </location>
    <ligand>
        <name>Zn(2+)</name>
        <dbReference type="ChEBI" id="CHEBI:29105"/>
        <label>1</label>
    </ligand>
</feature>
<feature type="binding site" description="via carbamate group" evidence="1">
    <location>
        <position position="103"/>
    </location>
    <ligand>
        <name>Zn(2+)</name>
        <dbReference type="ChEBI" id="CHEBI:29105"/>
        <label>2</label>
    </ligand>
</feature>
<feature type="binding site" evidence="1">
    <location>
        <position position="140"/>
    </location>
    <ligand>
        <name>substrate</name>
    </ligand>
</feature>
<feature type="binding site" evidence="1">
    <location>
        <position position="140"/>
    </location>
    <ligand>
        <name>Zn(2+)</name>
        <dbReference type="ChEBI" id="CHEBI:29105"/>
        <label>2</label>
    </ligand>
</feature>
<feature type="binding site" evidence="1">
    <location>
        <position position="178"/>
    </location>
    <ligand>
        <name>Zn(2+)</name>
        <dbReference type="ChEBI" id="CHEBI:29105"/>
        <label>2</label>
    </ligand>
</feature>
<feature type="binding site" evidence="1">
    <location>
        <position position="223"/>
    </location>
    <ligand>
        <name>substrate</name>
    </ligand>
</feature>
<feature type="binding site" evidence="1">
    <location>
        <position position="251"/>
    </location>
    <ligand>
        <name>Zn(2+)</name>
        <dbReference type="ChEBI" id="CHEBI:29105"/>
        <label>1</label>
    </ligand>
</feature>
<feature type="binding site" evidence="1">
    <location>
        <position position="255"/>
    </location>
    <ligand>
        <name>substrate</name>
    </ligand>
</feature>
<feature type="binding site" evidence="1">
    <location>
        <position position="267"/>
    </location>
    <ligand>
        <name>substrate</name>
    </ligand>
</feature>
<feature type="modified residue" description="N6-carboxylysine" evidence="1">
    <location>
        <position position="103"/>
    </location>
</feature>
<protein>
    <recommendedName>
        <fullName evidence="1">Dihydroorotase</fullName>
        <shortName evidence="1">DHOase</shortName>
        <ecNumber evidence="1">3.5.2.3</ecNumber>
    </recommendedName>
</protein>
<accession>A9MH00</accession>
<name>PYRC_SALAR</name>
<sequence>MTAPSQVLKIHRPDDWHVHLRDGDMLKTVVPYTSEIYGRAIVMPNLASPITTVDAAIAYRQRILDAVPAGHDFTPLMTCYLTDSLDADELERGFHEGVFTAAKLYPANATTNSSHGVTSIDAIMPVLERMEKLGMPLLVHGEVTHADVDIFDREARFIDTVMEPLRQRLTALKVVFEHITTKDAAQYVRDGNDYLAATITPQHLMFNRNHMLVGGIRPHLYCLPILKRNIHQQALRELVASGFTRAFLGTDSAPHSRHRKETSCGCAGCFNAPSALGSYAVVFEEMNALAHFEAFCSLNGPQFYGLPVNKGWVELVRDEQQIPENIALADDSLVPFLAGETVRWSVKK</sequence>
<keyword id="KW-0378">Hydrolase</keyword>
<keyword id="KW-0479">Metal-binding</keyword>
<keyword id="KW-0665">Pyrimidine biosynthesis</keyword>
<keyword id="KW-1185">Reference proteome</keyword>
<keyword id="KW-0862">Zinc</keyword>
<gene>
    <name evidence="1" type="primary">pyrC</name>
    <name type="ordered locus">SARI_01834</name>
</gene>
<comment type="function">
    <text evidence="1">Catalyzes the reversible cyclization of carbamoyl aspartate to dihydroorotate.</text>
</comment>
<comment type="catalytic activity">
    <reaction evidence="1">
        <text>(S)-dihydroorotate + H2O = N-carbamoyl-L-aspartate + H(+)</text>
        <dbReference type="Rhea" id="RHEA:24296"/>
        <dbReference type="ChEBI" id="CHEBI:15377"/>
        <dbReference type="ChEBI" id="CHEBI:15378"/>
        <dbReference type="ChEBI" id="CHEBI:30864"/>
        <dbReference type="ChEBI" id="CHEBI:32814"/>
        <dbReference type="EC" id="3.5.2.3"/>
    </reaction>
</comment>
<comment type="cofactor">
    <cofactor evidence="1">
        <name>Zn(2+)</name>
        <dbReference type="ChEBI" id="CHEBI:29105"/>
    </cofactor>
    <text evidence="1">Binds 2 Zn(2+) ions per subunit.</text>
</comment>
<comment type="pathway">
    <text evidence="1">Pyrimidine metabolism; UMP biosynthesis via de novo pathway; (S)-dihydroorotate from bicarbonate: step 3/3.</text>
</comment>
<comment type="subunit">
    <text evidence="1">Homodimer.</text>
</comment>
<comment type="similarity">
    <text evidence="1">Belongs to the metallo-dependent hydrolases superfamily. DHOase family. Class II DHOase subfamily.</text>
</comment>
<organism>
    <name type="scientific">Salmonella arizonae (strain ATCC BAA-731 / CDC346-86 / RSK2980)</name>
    <dbReference type="NCBI Taxonomy" id="41514"/>
    <lineage>
        <taxon>Bacteria</taxon>
        <taxon>Pseudomonadati</taxon>
        <taxon>Pseudomonadota</taxon>
        <taxon>Gammaproteobacteria</taxon>
        <taxon>Enterobacterales</taxon>
        <taxon>Enterobacteriaceae</taxon>
        <taxon>Salmonella</taxon>
    </lineage>
</organism>
<proteinExistence type="inferred from homology"/>
<reference key="1">
    <citation type="submission" date="2007-11" db="EMBL/GenBank/DDBJ databases">
        <authorList>
            <consortium name="The Salmonella enterica serovar Arizonae Genome Sequencing Project"/>
            <person name="McClelland M."/>
            <person name="Sanderson E.K."/>
            <person name="Porwollik S."/>
            <person name="Spieth J."/>
            <person name="Clifton W.S."/>
            <person name="Fulton R."/>
            <person name="Chunyan W."/>
            <person name="Wollam A."/>
            <person name="Shah N."/>
            <person name="Pepin K."/>
            <person name="Bhonagiri V."/>
            <person name="Nash W."/>
            <person name="Johnson M."/>
            <person name="Thiruvilangam P."/>
            <person name="Wilson R."/>
        </authorList>
    </citation>
    <scope>NUCLEOTIDE SEQUENCE [LARGE SCALE GENOMIC DNA]</scope>
    <source>
        <strain>ATCC BAA-731 / CDC346-86 / RSK2980</strain>
    </source>
</reference>